<sequence>MIPIVIEESGRGERAFDIYSRLLRERIIFLGEAVTSDSANRIVAQMLFLEAEDPEKDIYLYINSPGGSVYDGLGIFDTMQHIKPDVHTVCVGLAASMGAFLLCAGTKGKRSSLQHSRIMIHQPLGGARGQASDIRIQADEILYLKERLNQELSDRTGQPLDRIQQDTDRDFFMSPGEAVEYGLIDSVIDKRPIQAVE</sequence>
<dbReference type="EC" id="3.4.21.92" evidence="1"/>
<dbReference type="EMBL" id="BX569692">
    <property type="protein sequence ID" value="CAE07816.1"/>
    <property type="molecule type" value="Genomic_DNA"/>
</dbReference>
<dbReference type="RefSeq" id="WP_011128165.1">
    <property type="nucleotide sequence ID" value="NC_005070.1"/>
</dbReference>
<dbReference type="SMR" id="Q7U6N7"/>
<dbReference type="STRING" id="84588.SYNW1301"/>
<dbReference type="MEROPS" id="S14.001"/>
<dbReference type="KEGG" id="syw:SYNW1301"/>
<dbReference type="eggNOG" id="COG0740">
    <property type="taxonomic scope" value="Bacteria"/>
</dbReference>
<dbReference type="HOGENOM" id="CLU_058707_3_2_3"/>
<dbReference type="Proteomes" id="UP000001422">
    <property type="component" value="Chromosome"/>
</dbReference>
<dbReference type="GO" id="GO:0005737">
    <property type="term" value="C:cytoplasm"/>
    <property type="evidence" value="ECO:0007669"/>
    <property type="project" value="UniProtKB-SubCell"/>
</dbReference>
<dbReference type="GO" id="GO:0009368">
    <property type="term" value="C:endopeptidase Clp complex"/>
    <property type="evidence" value="ECO:0007669"/>
    <property type="project" value="TreeGrafter"/>
</dbReference>
<dbReference type="GO" id="GO:0004176">
    <property type="term" value="F:ATP-dependent peptidase activity"/>
    <property type="evidence" value="ECO:0007669"/>
    <property type="project" value="InterPro"/>
</dbReference>
<dbReference type="GO" id="GO:0051117">
    <property type="term" value="F:ATPase binding"/>
    <property type="evidence" value="ECO:0007669"/>
    <property type="project" value="TreeGrafter"/>
</dbReference>
<dbReference type="GO" id="GO:0004252">
    <property type="term" value="F:serine-type endopeptidase activity"/>
    <property type="evidence" value="ECO:0007669"/>
    <property type="project" value="UniProtKB-UniRule"/>
</dbReference>
<dbReference type="GO" id="GO:0006515">
    <property type="term" value="P:protein quality control for misfolded or incompletely synthesized proteins"/>
    <property type="evidence" value="ECO:0007669"/>
    <property type="project" value="TreeGrafter"/>
</dbReference>
<dbReference type="CDD" id="cd07017">
    <property type="entry name" value="S14_ClpP_2"/>
    <property type="match status" value="1"/>
</dbReference>
<dbReference type="FunFam" id="3.90.226.10:FF:000001">
    <property type="entry name" value="ATP-dependent Clp protease proteolytic subunit"/>
    <property type="match status" value="1"/>
</dbReference>
<dbReference type="Gene3D" id="3.90.226.10">
    <property type="entry name" value="2-enoyl-CoA Hydratase, Chain A, domain 1"/>
    <property type="match status" value="1"/>
</dbReference>
<dbReference type="HAMAP" id="MF_00444">
    <property type="entry name" value="ClpP"/>
    <property type="match status" value="1"/>
</dbReference>
<dbReference type="InterPro" id="IPR001907">
    <property type="entry name" value="ClpP"/>
</dbReference>
<dbReference type="InterPro" id="IPR029045">
    <property type="entry name" value="ClpP/crotonase-like_dom_sf"/>
</dbReference>
<dbReference type="InterPro" id="IPR023562">
    <property type="entry name" value="ClpP/TepA"/>
</dbReference>
<dbReference type="InterPro" id="IPR018215">
    <property type="entry name" value="ClpP_Ser_AS"/>
</dbReference>
<dbReference type="NCBIfam" id="TIGR00493">
    <property type="entry name" value="clpP"/>
    <property type="match status" value="1"/>
</dbReference>
<dbReference type="NCBIfam" id="NF001368">
    <property type="entry name" value="PRK00277.1"/>
    <property type="match status" value="1"/>
</dbReference>
<dbReference type="NCBIfam" id="NF009203">
    <property type="entry name" value="PRK12551.1"/>
    <property type="match status" value="1"/>
</dbReference>
<dbReference type="NCBIfam" id="NF009205">
    <property type="entry name" value="PRK12553.1"/>
    <property type="match status" value="1"/>
</dbReference>
<dbReference type="PANTHER" id="PTHR10381">
    <property type="entry name" value="ATP-DEPENDENT CLP PROTEASE PROTEOLYTIC SUBUNIT"/>
    <property type="match status" value="1"/>
</dbReference>
<dbReference type="PANTHER" id="PTHR10381:SF70">
    <property type="entry name" value="ATP-DEPENDENT CLP PROTEASE PROTEOLYTIC SUBUNIT"/>
    <property type="match status" value="1"/>
</dbReference>
<dbReference type="Pfam" id="PF00574">
    <property type="entry name" value="CLP_protease"/>
    <property type="match status" value="1"/>
</dbReference>
<dbReference type="PRINTS" id="PR00127">
    <property type="entry name" value="CLPPROTEASEP"/>
</dbReference>
<dbReference type="SUPFAM" id="SSF52096">
    <property type="entry name" value="ClpP/crotonase"/>
    <property type="match status" value="1"/>
</dbReference>
<dbReference type="PROSITE" id="PS00381">
    <property type="entry name" value="CLP_PROTEASE_SER"/>
    <property type="match status" value="1"/>
</dbReference>
<proteinExistence type="inferred from homology"/>
<feature type="chain" id="PRO_0000179692" description="ATP-dependent Clp protease proteolytic subunit 2">
    <location>
        <begin position="1"/>
        <end position="197"/>
    </location>
</feature>
<feature type="active site" description="Nucleophile" evidence="1">
    <location>
        <position position="96"/>
    </location>
</feature>
<feature type="active site" evidence="1">
    <location>
        <position position="121"/>
    </location>
</feature>
<reference key="1">
    <citation type="journal article" date="2003" name="Nature">
        <title>The genome of a motile marine Synechococcus.</title>
        <authorList>
            <person name="Palenik B."/>
            <person name="Brahamsha B."/>
            <person name="Larimer F.W."/>
            <person name="Land M.L."/>
            <person name="Hauser L."/>
            <person name="Chain P."/>
            <person name="Lamerdin J.E."/>
            <person name="Regala W."/>
            <person name="Allen E.E."/>
            <person name="McCarren J."/>
            <person name="Paulsen I.T."/>
            <person name="Dufresne A."/>
            <person name="Partensky F."/>
            <person name="Webb E.A."/>
            <person name="Waterbury J."/>
        </authorList>
    </citation>
    <scope>NUCLEOTIDE SEQUENCE [LARGE SCALE GENOMIC DNA]</scope>
    <source>
        <strain>WH8102</strain>
    </source>
</reference>
<protein>
    <recommendedName>
        <fullName evidence="1">ATP-dependent Clp protease proteolytic subunit 2</fullName>
        <ecNumber evidence="1">3.4.21.92</ecNumber>
    </recommendedName>
    <alternativeName>
        <fullName evidence="1">Endopeptidase Clp 2</fullName>
    </alternativeName>
</protein>
<evidence type="ECO:0000255" key="1">
    <source>
        <dbReference type="HAMAP-Rule" id="MF_00444"/>
    </source>
</evidence>
<comment type="function">
    <text evidence="1">Cleaves peptides in various proteins in a process that requires ATP hydrolysis. Has a chymotrypsin-like activity. Plays a major role in the degradation of misfolded proteins.</text>
</comment>
<comment type="catalytic activity">
    <reaction evidence="1">
        <text>Hydrolysis of proteins to small peptides in the presence of ATP and magnesium. alpha-casein is the usual test substrate. In the absence of ATP, only oligopeptides shorter than five residues are hydrolyzed (such as succinyl-Leu-Tyr-|-NHMec, and Leu-Tyr-Leu-|-Tyr-Trp, in which cleavage of the -Tyr-|-Leu- and -Tyr-|-Trp bonds also occurs).</text>
        <dbReference type="EC" id="3.4.21.92"/>
    </reaction>
</comment>
<comment type="subunit">
    <text evidence="1">Fourteen ClpP subunits assemble into 2 heptameric rings which stack back to back to give a disk-like structure with a central cavity, resembling the structure of eukaryotic proteasomes.</text>
</comment>
<comment type="subcellular location">
    <subcellularLocation>
        <location evidence="1">Cytoplasm</location>
    </subcellularLocation>
</comment>
<comment type="similarity">
    <text evidence="1">Belongs to the peptidase S14 family.</text>
</comment>
<accession>Q7U6N7</accession>
<gene>
    <name evidence="1" type="primary">clpP2</name>
    <name type="ordered locus">SYNW1301</name>
</gene>
<organism>
    <name type="scientific">Parasynechococcus marenigrum (strain WH8102)</name>
    <dbReference type="NCBI Taxonomy" id="84588"/>
    <lineage>
        <taxon>Bacteria</taxon>
        <taxon>Bacillati</taxon>
        <taxon>Cyanobacteriota</taxon>
        <taxon>Cyanophyceae</taxon>
        <taxon>Synechococcales</taxon>
        <taxon>Prochlorococcaceae</taxon>
        <taxon>Parasynechococcus</taxon>
        <taxon>Parasynechococcus marenigrum</taxon>
    </lineage>
</organism>
<name>CLPP2_PARMW</name>
<keyword id="KW-0963">Cytoplasm</keyword>
<keyword id="KW-0378">Hydrolase</keyword>
<keyword id="KW-0645">Protease</keyword>
<keyword id="KW-0720">Serine protease</keyword>